<name>TP4AP_MOUSE</name>
<feature type="initiator methionine" description="Removed" evidence="1">
    <location>
        <position position="1"/>
    </location>
</feature>
<feature type="chain" id="PRO_0000072642" description="Short transient receptor potential channel 4-associated protein">
    <location>
        <begin position="2"/>
        <end position="797"/>
    </location>
</feature>
<feature type="region of interest" description="Interaction with TNFRSF1A" evidence="2">
    <location>
        <begin position="2"/>
        <end position="400"/>
    </location>
</feature>
<feature type="modified residue" description="N-acetylalanine" evidence="1">
    <location>
        <position position="2"/>
    </location>
</feature>
<feature type="splice variant" id="VSP_003983" description="In isoform 2." evidence="6">
    <location>
        <begin position="351"/>
        <end position="358"/>
    </location>
</feature>
<feature type="sequence conflict" description="In Ref. 2; AAF36513." evidence="8" ref="2">
    <original>GASR</original>
    <variation>LPYW</variation>
    <location>
        <begin position="11"/>
        <end position="14"/>
    </location>
</feature>
<feature type="sequence conflict" description="In Ref. 2; AAF36513." evidence="8" ref="2">
    <original>I</original>
    <variation>L</variation>
    <location>
        <position position="158"/>
    </location>
</feature>
<feature type="sequence conflict" description="In Ref. 2; AAF36513." evidence="8" ref="2">
    <original>F</original>
    <variation>L</variation>
    <location>
        <position position="193"/>
    </location>
</feature>
<feature type="sequence conflict" description="In Ref. 1; AAM46938." evidence="8" ref="1">
    <original>G</original>
    <variation>S</variation>
    <location>
        <position position="359"/>
    </location>
</feature>
<feature type="sequence conflict" description="In Ref. 1; AAM46938." evidence="8" ref="1">
    <original>R</original>
    <variation>K</variation>
    <location>
        <position position="532"/>
    </location>
</feature>
<feature type="sequence conflict" description="In Ref. 4; AAL08422." evidence="8" ref="4">
    <original>L</original>
    <variation>V</variation>
    <location>
        <position position="769"/>
    </location>
</feature>
<proteinExistence type="evidence at protein level"/>
<dbReference type="EMBL" id="AF509881">
    <property type="protein sequence ID" value="AAM46938.1"/>
    <property type="molecule type" value="mRNA"/>
</dbReference>
<dbReference type="EMBL" id="AF130458">
    <property type="protein sequence ID" value="AAF36513.1"/>
    <property type="molecule type" value="mRNA"/>
</dbReference>
<dbReference type="EMBL" id="BC003931">
    <property type="protein sequence ID" value="AAH03931.1"/>
    <property type="molecule type" value="mRNA"/>
</dbReference>
<dbReference type="EMBL" id="BC033274">
    <property type="protein sequence ID" value="AAH33274.1"/>
    <property type="molecule type" value="mRNA"/>
</dbReference>
<dbReference type="EMBL" id="BC057330">
    <property type="protein sequence ID" value="AAH57330.1"/>
    <property type="molecule type" value="mRNA"/>
</dbReference>
<dbReference type="EMBL" id="AF093589">
    <property type="protein sequence ID" value="AAL08422.1"/>
    <property type="status" value="ALT_INIT"/>
    <property type="molecule type" value="mRNA"/>
</dbReference>
<dbReference type="CCDS" id="CCDS16952.1">
    <molecule id="Q9JLV2-2"/>
</dbReference>
<dbReference type="CCDS" id="CCDS50769.1">
    <molecule id="Q9JLV2-1"/>
</dbReference>
<dbReference type="RefSeq" id="NP_001156924.1">
    <molecule id="Q9JLV2-1"/>
    <property type="nucleotide sequence ID" value="NM_001163452.1"/>
</dbReference>
<dbReference type="RefSeq" id="NP_062802.2">
    <molecule id="Q9JLV2-2"/>
    <property type="nucleotide sequence ID" value="NM_019828.2"/>
</dbReference>
<dbReference type="FunCoup" id="Q9JLV2">
    <property type="interactions" value="661"/>
</dbReference>
<dbReference type="STRING" id="10090.ENSMUSP00000037574"/>
<dbReference type="iPTMnet" id="Q9JLV2"/>
<dbReference type="PhosphoSitePlus" id="Q9JLV2"/>
<dbReference type="PaxDb" id="10090-ENSMUSP00000037574"/>
<dbReference type="ProteomicsDB" id="258958">
    <molecule id="Q9JLV2-1"/>
</dbReference>
<dbReference type="ProteomicsDB" id="258959">
    <molecule id="Q9JLV2-2"/>
</dbReference>
<dbReference type="Pumba" id="Q9JLV2"/>
<dbReference type="Antibodypedia" id="25963">
    <property type="antibodies" value="192 antibodies from 29 providers"/>
</dbReference>
<dbReference type="DNASU" id="56407"/>
<dbReference type="Ensembl" id="ENSMUST00000041059.12">
    <molecule id="Q9JLV2-1"/>
    <property type="protein sequence ID" value="ENSMUSP00000037574.6"/>
    <property type="gene ID" value="ENSMUSG00000038324.14"/>
</dbReference>
<dbReference type="Ensembl" id="ENSMUST00000103140.5">
    <molecule id="Q9JLV2-2"/>
    <property type="protein sequence ID" value="ENSMUSP00000099429.5"/>
    <property type="gene ID" value="ENSMUSG00000038324.14"/>
</dbReference>
<dbReference type="GeneID" id="56407"/>
<dbReference type="KEGG" id="mmu:56407"/>
<dbReference type="UCSC" id="uc008nlc.2">
    <molecule id="Q9JLV2-1"/>
    <property type="organism name" value="mouse"/>
</dbReference>
<dbReference type="UCSC" id="uc012che.1">
    <molecule id="Q9JLV2-2"/>
    <property type="organism name" value="mouse"/>
</dbReference>
<dbReference type="AGR" id="MGI:1930751"/>
<dbReference type="CTD" id="26133"/>
<dbReference type="MGI" id="MGI:1930751">
    <property type="gene designation" value="Trpc4ap"/>
</dbReference>
<dbReference type="VEuPathDB" id="HostDB:ENSMUSG00000038324"/>
<dbReference type="eggNOG" id="ENOG502QQ1C">
    <property type="taxonomic scope" value="Eukaryota"/>
</dbReference>
<dbReference type="GeneTree" id="ENSGT00390000018330"/>
<dbReference type="HOGENOM" id="CLU_015792_1_0_1"/>
<dbReference type="InParanoid" id="Q9JLV2"/>
<dbReference type="OMA" id="YNSCICT"/>
<dbReference type="OrthoDB" id="1866965at2759"/>
<dbReference type="PhylomeDB" id="Q9JLV2"/>
<dbReference type="TreeFam" id="TF329145"/>
<dbReference type="Reactome" id="R-MMU-3295583">
    <property type="pathway name" value="TRP channels"/>
</dbReference>
<dbReference type="UniPathway" id="UPA00143"/>
<dbReference type="BioGRID-ORCS" id="56407">
    <property type="hits" value="1 hit in 78 CRISPR screens"/>
</dbReference>
<dbReference type="ChiTaRS" id="Trpc4ap">
    <property type="organism name" value="mouse"/>
</dbReference>
<dbReference type="PRO" id="PR:Q9JLV2"/>
<dbReference type="Proteomes" id="UP000000589">
    <property type="component" value="Chromosome 2"/>
</dbReference>
<dbReference type="RNAct" id="Q9JLV2">
    <property type="molecule type" value="protein"/>
</dbReference>
<dbReference type="Bgee" id="ENSMUSG00000038324">
    <property type="expression patterns" value="Expressed in spermatocyte and 250 other cell types or tissues"/>
</dbReference>
<dbReference type="ExpressionAtlas" id="Q9JLV2">
    <property type="expression patterns" value="baseline and differential"/>
</dbReference>
<dbReference type="GO" id="GO:0080008">
    <property type="term" value="C:Cul4-RING E3 ubiquitin ligase complex"/>
    <property type="evidence" value="ECO:0000250"/>
    <property type="project" value="UniProtKB"/>
</dbReference>
<dbReference type="GO" id="GO:0031464">
    <property type="term" value="C:Cul4A-RING E3 ubiquitin ligase complex"/>
    <property type="evidence" value="ECO:0000250"/>
    <property type="project" value="UniProtKB"/>
</dbReference>
<dbReference type="GO" id="GO:0005829">
    <property type="term" value="C:cytosol"/>
    <property type="evidence" value="ECO:0007669"/>
    <property type="project" value="Ensembl"/>
</dbReference>
<dbReference type="GO" id="GO:0048471">
    <property type="term" value="C:perinuclear region of cytoplasm"/>
    <property type="evidence" value="ECO:0007669"/>
    <property type="project" value="UniProtKB-SubCell"/>
</dbReference>
<dbReference type="GO" id="GO:0019902">
    <property type="term" value="F:phosphatase binding"/>
    <property type="evidence" value="ECO:0000250"/>
    <property type="project" value="UniProtKB"/>
</dbReference>
<dbReference type="GO" id="GO:1990756">
    <property type="term" value="F:ubiquitin-like ligase-substrate adaptor activity"/>
    <property type="evidence" value="ECO:0000250"/>
    <property type="project" value="UniProtKB"/>
</dbReference>
<dbReference type="GO" id="GO:0048820">
    <property type="term" value="P:hair follicle maturation"/>
    <property type="evidence" value="ECO:0000315"/>
    <property type="project" value="MGI"/>
</dbReference>
<dbReference type="GO" id="GO:0016567">
    <property type="term" value="P:protein ubiquitination"/>
    <property type="evidence" value="ECO:0000250"/>
    <property type="project" value="UniProtKB"/>
</dbReference>
<dbReference type="GO" id="GO:0006511">
    <property type="term" value="P:ubiquitin-dependent protein catabolic process"/>
    <property type="evidence" value="ECO:0000250"/>
    <property type="project" value="UniProtKB"/>
</dbReference>
<dbReference type="GO" id="GO:0140627">
    <property type="term" value="P:ubiquitin-dependent protein catabolic process via the C-end degron rule pathway"/>
    <property type="evidence" value="ECO:0000250"/>
    <property type="project" value="UniProtKB"/>
</dbReference>
<dbReference type="InterPro" id="IPR016024">
    <property type="entry name" value="ARM-type_fold"/>
</dbReference>
<dbReference type="InterPro" id="IPR022162">
    <property type="entry name" value="TRPC4AP"/>
</dbReference>
<dbReference type="PANTHER" id="PTHR31743:SF1">
    <property type="entry name" value="SHORT TRANSIENT RECEPTOR POTENTIAL CHANNEL 4-ASSOCIATED PROTEIN"/>
    <property type="match status" value="1"/>
</dbReference>
<dbReference type="PANTHER" id="PTHR31743">
    <property type="entry name" value="TRANSIENT RECEPTOR POTENTIAL CHANNEL 4-ASSOCIATED PROTEIN TCPC4AP"/>
    <property type="match status" value="1"/>
</dbReference>
<dbReference type="Pfam" id="PF12463">
    <property type="entry name" value="DUF3689"/>
    <property type="match status" value="1"/>
</dbReference>
<dbReference type="SUPFAM" id="SSF48371">
    <property type="entry name" value="ARM repeat"/>
    <property type="match status" value="1"/>
</dbReference>
<reference key="1">
    <citation type="journal article" date="2003" name="Mol. Cell. Biol.">
        <title>TRUSS, a novel tumor necrosis factor receptor 1 scaffolding protein that mediates activation of the transcription factor NF-kappaB.</title>
        <authorList>
            <person name="Soond S.M."/>
            <person name="Terry J.L."/>
            <person name="Colbert J.D."/>
            <person name="Riches D.W.H."/>
        </authorList>
    </citation>
    <scope>NUCLEOTIDE SEQUENCE [MRNA] (ISOFORM 1)</scope>
    <scope>FUNCTION</scope>
    <scope>TISSUE SPECIFICITY</scope>
    <scope>INTERACTION WITH TNFRSF1A; TRADD; TRAF2; CHUK; IKBKB AND IKBKG</scope>
    <source>
        <strain>BALB/cJ</strain>
    </source>
</reference>
<reference key="2">
    <citation type="submission" date="1999-02" db="EMBL/GenBank/DDBJ databases">
        <authorList>
            <person name="Qian F."/>
            <person name="Philipson L.H."/>
        </authorList>
    </citation>
    <scope>NUCLEOTIDE SEQUENCE [MRNA] (ISOFORM 2)</scope>
    <source>
        <tissue>Insulinoma</tissue>
    </source>
</reference>
<reference key="3">
    <citation type="journal article" date="2004" name="Genome Res.">
        <title>The status, quality, and expansion of the NIH full-length cDNA project: the Mammalian Gene Collection (MGC).</title>
        <authorList>
            <consortium name="The MGC Project Team"/>
        </authorList>
    </citation>
    <scope>NUCLEOTIDE SEQUENCE [LARGE SCALE MRNA] (ISOFORM 1)</scope>
    <source>
        <strain>FVB/N</strain>
        <tissue>Mammary gland</tissue>
    </source>
</reference>
<reference key="4">
    <citation type="submission" date="1998-09" db="EMBL/GenBank/DDBJ databases">
        <title>A novel Rabex-5/Rin2-interacting protein.</title>
        <authorList>
            <person name="Scherrer D."/>
            <person name="Tsai M."/>
            <person name="Galli S.J."/>
            <person name="Tam S.-Y."/>
        </authorList>
    </citation>
    <scope>NUCLEOTIDE SEQUENCE [MRNA] OF 154-797 (ISOFORM 1)</scope>
    <source>
        <strain>BALB/cJ</strain>
        <tissue>Brain</tissue>
    </source>
</reference>
<reference key="5">
    <citation type="journal article" date="2006" name="FEBS Lett.">
        <title>TRUSS, a tumor necrosis factor receptor-1-interacting protein, activates c-Jun NH(2)-terminal kinase and transcription factor AP-1.</title>
        <authorList>
            <person name="Soond S.M."/>
            <person name="Terry J.L."/>
            <person name="Riches D.W.H."/>
        </authorList>
    </citation>
    <scope>FUNCTION</scope>
    <scope>INTERACTION WITH TRAF2</scope>
</reference>
<reference key="6">
    <citation type="journal article" date="2010" name="Cell">
        <title>A tissue-specific atlas of mouse protein phosphorylation and expression.</title>
        <authorList>
            <person name="Huttlin E.L."/>
            <person name="Jedrychowski M.P."/>
            <person name="Elias J.E."/>
            <person name="Goswami T."/>
            <person name="Rad R."/>
            <person name="Beausoleil S.A."/>
            <person name="Villen J."/>
            <person name="Haas W."/>
            <person name="Sowa M.E."/>
            <person name="Gygi S.P."/>
        </authorList>
    </citation>
    <scope>IDENTIFICATION BY MASS SPECTROMETRY [LARGE SCALE ANALYSIS]</scope>
    <source>
        <tissue>Spleen</tissue>
        <tissue>Testis</tissue>
    </source>
</reference>
<reference key="7">
    <citation type="journal article" date="2010" name="J. Cell. Physiol.">
        <title>TRUSS, TNF-R1, and TRPC ion channels synergistically reverse endoplasmic reticulum Ca2+ storage reduction in response to m1 muscarinic acetylcholine receptor signaling.</title>
        <authorList>
            <person name="Mace K.E."/>
            <person name="Lussier M.P."/>
            <person name="Boulay G."/>
            <person name="Terry-Powers J.L."/>
            <person name="Parfrey H."/>
            <person name="Perraud A.L."/>
            <person name="Riches D.W.H."/>
        </authorList>
    </citation>
    <scope>FUNCTION</scope>
    <scope>INTERACTION WITH TRPC1; TRPC4 AND TRPC5</scope>
</reference>
<accession>Q9JLV2</accession>
<accession>Q920J6</accession>
<accession>Q99L03</accession>
<keyword id="KW-0007">Acetylation</keyword>
<keyword id="KW-0025">Alternative splicing</keyword>
<keyword id="KW-0963">Cytoplasm</keyword>
<keyword id="KW-0597">Phosphoprotein</keyword>
<keyword id="KW-1185">Reference proteome</keyword>
<keyword id="KW-0832">Ubl conjugation</keyword>
<keyword id="KW-0833">Ubl conjugation pathway</keyword>
<comment type="function">
    <text evidence="1 2 3 4">Substrate-recognition component of a DCX (DDB1-CUL4-X-box) E3 ubiquitin-protein ligase complex required for cell cycle control. The DCX(TRPC4AP) complex specifically mediates the polyubiquitination and subsequent degradation of MYC as part of the DesCEND (destruction via C-end degrons) pathway. The DesCEND (destruction via C-end degrons) pathway recognizes a C-degron located at the extreme C terminus of target proteins, leading to their ubiquitination and degradation. The DCX(TRPC4AP) complex specifically recognizes proteins with an arginine at the minus 3 position (R-3 motif) at the C-terminus, such as MYC, leading to their ubiquitination and degradation (By similarity). Also participates in the activation of NFKB1 in response to ligation of TNFRSF1A, possibly by linking TNFRSF1A to the IKK signalosome (PubMed:14585990). Involved in JNK activation via its interaction with TRAF2 (PubMed:16876162). Also involved in elevation of endoplasmic reticulum Ca(2+) storage reduction in response to CHRM1 (PubMed:20458742).</text>
</comment>
<comment type="pathway">
    <text evidence="1">Protein modification; protein ubiquitination.</text>
</comment>
<comment type="subunit">
    <text evidence="1 2 3 4">Component of the DCX(TRPC4AP) E3 ubiquitin ligase complex, at least composed of CUL4A, DDB1, TRPC4AP/TRUSS and RBX1 (By similarity). Interacts with MYC (By similarity). Constitutively associated with TNFRSF1A (PubMed:14585990). Directly interacts with TRADD, TRAF2, CHUK, IKBKB and IKBKG (PubMed:14585990, PubMed:16876162). Interacts with TRPC1, TRPC4 and TRPC5 (PubMed:20458742).</text>
</comment>
<comment type="subcellular location">
    <subcellularLocation>
        <location evidence="1">Cytoplasm</location>
        <location evidence="1">Perinuclear region</location>
    </subcellularLocation>
</comment>
<comment type="alternative products">
    <event type="alternative splicing"/>
    <isoform>
        <id>Q9JLV2-1</id>
        <name>1</name>
        <sequence type="displayed"/>
    </isoform>
    <isoform>
        <id>Q9JLV2-2</id>
        <name>2</name>
        <sequence type="described" ref="VSP_003983"/>
    </isoform>
</comment>
<comment type="tissue specificity">
    <text evidence="2">Widely expressed, with high levels in heart, liver and testis.</text>
</comment>
<comment type="PTM">
    <text evidence="1">Phosphorylated by GSK3B; phosphorylation is required for ubiquitination.</text>
</comment>
<comment type="PTM">
    <text evidence="1">Ubiquitinated by a SCF (SKP1-CUL1-F-box protein) E3 ubiquitin-protein ligase containing SKP2, leading to its degradation. Phosphorylation by GSK3B is required for ubiquitination.</text>
</comment>
<comment type="sequence caution" evidence="8">
    <conflict type="erroneous initiation">
        <sequence resource="EMBL-CDS" id="AAL08422"/>
    </conflict>
    <text>Truncated N-terminus.</text>
</comment>
<protein>
    <recommendedName>
        <fullName evidence="8">Short transient receptor potential channel 4-associated protein</fullName>
        <shortName evidence="1">Trp4-associated protein</shortName>
        <shortName evidence="1">Trpc4-associated protein</shortName>
    </recommendedName>
    <alternativeName>
        <fullName>Protein TAP1</fullName>
    </alternativeName>
    <alternativeName>
        <fullName evidence="7">Rabex-5/Rin2-interacting protein</fullName>
    </alternativeName>
    <alternativeName>
        <fullName evidence="5">TNF-receptor ubiquitous scaffolding/signaling protein</fullName>
        <shortName evidence="5">Protein TRUSS</shortName>
    </alternativeName>
</protein>
<evidence type="ECO:0000250" key="1">
    <source>
        <dbReference type="UniProtKB" id="Q8TEL6"/>
    </source>
</evidence>
<evidence type="ECO:0000269" key="2">
    <source>
    </source>
</evidence>
<evidence type="ECO:0000269" key="3">
    <source>
    </source>
</evidence>
<evidence type="ECO:0000269" key="4">
    <source>
    </source>
</evidence>
<evidence type="ECO:0000303" key="5">
    <source>
    </source>
</evidence>
<evidence type="ECO:0000303" key="6">
    <source ref="2"/>
</evidence>
<evidence type="ECO:0000303" key="7">
    <source ref="4"/>
</evidence>
<evidence type="ECO:0000305" key="8"/>
<evidence type="ECO:0000312" key="9">
    <source>
        <dbReference type="MGI" id="MGI:1930751"/>
    </source>
</evidence>
<gene>
    <name evidence="9" type="primary">Trpc4ap</name>
    <name type="synonym">Trrp4ap</name>
</gene>
<sequence>MAAAPAAAGAGASRGRRLAATAAAWGGWGGRPRPGNILLQLRQGQLTGRGLVRAVQFTETFLTERDKLSKWSGIPQLLLKLYATSHLHSDFVECQSILKEISPLLSMEAMAFVTEDRKFTQEATYPNTYIFDLFGGVDLLVEILMRPTISIRGQKLKISDEMSKDCLSILYNTCVCTEGVTKRLAEKNDFVIFLFTLMTSKKTFLQTATLIEDILGVKKEMIRLDEVPNLSSLVSNFDQQQLANFCRILAVTISEMDTGNDDKHTLLAKNAQQKKSLSLGPSAAEINQAALLSIPGFVERLCKLATRKVSESTGTASFLQELEEWYTWLDNALVLDALMRVANEESEHNQAPTVFPSLGTSEEGGLPHTSARAQLPQSMKIMHEIMYKLEVLYVLCVLLMGRQRNQVHRMIAEFKLIPGLNNLFDKLIWRKHSASALVLHGHNQNCDCSPDITLKIQFLRLLQSFSDHHENKYLLLNNQELNELSAISLKANIPEVEAVLNTDRSLVCDGKRGLLTRLLQVMKKEPAESSFRFWQARAVESFLRGTTSYADQMFLLKRGLLEHILYCIVDSECKSRDVLQSYFDLLGELMKFNVDAFKRFNKYINTDAKFQVFLKQINSSLVDSNMLVRCVTLSLDRFENQVDMKVAEVLSECRLLAYISQVPTQMSFLFRLINIIHVQTLTQENVSCLNTSLVILMLARRKERLPLYLRLLQRMEHSKKYPGFLLNNFHNLLRFWQQHYLHKDKDSTCLENSSCISFSYWKETVSILLNPDRQSPSALVSYIEEPYMDIDRDFTEE</sequence>
<organism>
    <name type="scientific">Mus musculus</name>
    <name type="common">Mouse</name>
    <dbReference type="NCBI Taxonomy" id="10090"/>
    <lineage>
        <taxon>Eukaryota</taxon>
        <taxon>Metazoa</taxon>
        <taxon>Chordata</taxon>
        <taxon>Craniata</taxon>
        <taxon>Vertebrata</taxon>
        <taxon>Euteleostomi</taxon>
        <taxon>Mammalia</taxon>
        <taxon>Eutheria</taxon>
        <taxon>Euarchontoglires</taxon>
        <taxon>Glires</taxon>
        <taxon>Rodentia</taxon>
        <taxon>Myomorpha</taxon>
        <taxon>Muroidea</taxon>
        <taxon>Muridae</taxon>
        <taxon>Murinae</taxon>
        <taxon>Mus</taxon>
        <taxon>Mus</taxon>
    </lineage>
</organism>